<organism>
    <name type="scientific">Bos taurus</name>
    <name type="common">Bovine</name>
    <dbReference type="NCBI Taxonomy" id="9913"/>
    <lineage>
        <taxon>Eukaryota</taxon>
        <taxon>Metazoa</taxon>
        <taxon>Chordata</taxon>
        <taxon>Craniata</taxon>
        <taxon>Vertebrata</taxon>
        <taxon>Euteleostomi</taxon>
        <taxon>Mammalia</taxon>
        <taxon>Eutheria</taxon>
        <taxon>Laurasiatheria</taxon>
        <taxon>Artiodactyla</taxon>
        <taxon>Ruminantia</taxon>
        <taxon>Pecora</taxon>
        <taxon>Bovidae</taxon>
        <taxon>Bovinae</taxon>
        <taxon>Bos</taxon>
    </lineage>
</organism>
<keyword id="KW-0963">Cytoplasm</keyword>
<keyword id="KW-0344">Guanine-nucleotide releasing factor</keyword>
<keyword id="KW-0539">Nucleus</keyword>
<keyword id="KW-0597">Phosphoprotein</keyword>
<keyword id="KW-1185">Reference proteome</keyword>
<keyword id="KW-0677">Repeat</keyword>
<sequence>MEPEPHSSEAVPTAAALFAWGANSYGQLGLGHKEDVLSAQQLSDFCKSGCIKRITGGGGHSAVVTDEGSLFVCGLNKDGQLGLGHTEEVLYFTPCKSLLGCAIQQVACGWDFTIILTENGQVLSCGSNSFGQLGVPHGPRRCVIPQAIELLREKVVSIAAGLRHALAATASGTVFQWGTGLASSGRRLCPGQTLPLFLTAKEPSTVTGLENSQAVCVLAGSDHSASLTDAGELYVWGSNKHGQLASQAAFLLLPQRIEARCFQNEKIAAVWSGWTHLVAQTVTGKVFTWGRADYGQLGRTVETREGWESEKQDPSLPGSGPQKGTPSCLPCLTGATEISCGSEHNLAVIGGVCHSWGWNEHGMCGDGTEADVWAPKPVPGLRFFLGLHVGCGAGHSLALCQLPALPALGQHPSVTSPSPDATKEARSQEAMEQERNQKERHAETSPQAQSDRFRNGGLVAETLE</sequence>
<evidence type="ECO:0000250" key="1"/>
<evidence type="ECO:0000250" key="2">
    <source>
        <dbReference type="UniProtKB" id="Q9UGK8"/>
    </source>
</evidence>
<evidence type="ECO:0000256" key="3">
    <source>
        <dbReference type="SAM" id="MobiDB-lite"/>
    </source>
</evidence>
<feature type="chain" id="PRO_0000259970" description="Secretion-regulating guanine nucleotide exchange factor">
    <location>
        <begin position="1"/>
        <end position="464"/>
    </location>
</feature>
<feature type="repeat" description="RCC1 1">
    <location>
        <begin position="14"/>
        <end position="66"/>
    </location>
</feature>
<feature type="repeat" description="RCC1 2">
    <location>
        <begin position="68"/>
        <end position="118"/>
    </location>
</feature>
<feature type="repeat" description="RCC1 3">
    <location>
        <begin position="119"/>
        <end position="170"/>
    </location>
</feature>
<feature type="repeat" description="RCC1 4">
    <location>
        <begin position="172"/>
        <end position="229"/>
    </location>
</feature>
<feature type="repeat" description="RCC1 5">
    <location>
        <begin position="230"/>
        <end position="282"/>
    </location>
</feature>
<feature type="repeat" description="RCC1 6">
    <location>
        <begin position="283"/>
        <end position="349"/>
    </location>
</feature>
<feature type="repeat" description="RCC1 7">
    <location>
        <begin position="350"/>
        <end position="401"/>
    </location>
</feature>
<feature type="region of interest" description="Disordered" evidence="3">
    <location>
        <begin position="301"/>
        <end position="323"/>
    </location>
</feature>
<feature type="region of interest" description="Disordered" evidence="3">
    <location>
        <begin position="411"/>
        <end position="464"/>
    </location>
</feature>
<feature type="compositionally biased region" description="Basic and acidic residues" evidence="3">
    <location>
        <begin position="301"/>
        <end position="313"/>
    </location>
</feature>
<feature type="compositionally biased region" description="Basic and acidic residues" evidence="3">
    <location>
        <begin position="421"/>
        <end position="443"/>
    </location>
</feature>
<feature type="modified residue" description="Phosphoserine" evidence="2">
    <location>
        <position position="427"/>
    </location>
</feature>
<accession>Q3MHW0</accession>
<gene>
    <name type="primary">SERGEF</name>
</gene>
<reference key="1">
    <citation type="submission" date="2005-09" db="EMBL/GenBank/DDBJ databases">
        <authorList>
            <consortium name="NIH - Mammalian Gene Collection (MGC) project"/>
        </authorList>
    </citation>
    <scope>NUCLEOTIDE SEQUENCE [LARGE SCALE MRNA]</scope>
    <source>
        <strain>Hereford</strain>
        <tissue>Uterus</tissue>
    </source>
</reference>
<dbReference type="EMBL" id="BC104610">
    <property type="protein sequence ID" value="AAI04611.1"/>
    <property type="molecule type" value="mRNA"/>
</dbReference>
<dbReference type="RefSeq" id="NP_001069489.1">
    <property type="nucleotide sequence ID" value="NM_001076021.1"/>
</dbReference>
<dbReference type="SMR" id="Q3MHW0"/>
<dbReference type="FunCoup" id="Q3MHW0">
    <property type="interactions" value="1215"/>
</dbReference>
<dbReference type="STRING" id="9913.ENSBTAP00000007022"/>
<dbReference type="PaxDb" id="9913-ENSBTAP00000007022"/>
<dbReference type="GeneID" id="534377"/>
<dbReference type="KEGG" id="bta:534377"/>
<dbReference type="CTD" id="26297"/>
<dbReference type="VEuPathDB" id="HostDB:ENSBTAG00000005340"/>
<dbReference type="eggNOG" id="KOG1426">
    <property type="taxonomic scope" value="Eukaryota"/>
</dbReference>
<dbReference type="HOGENOM" id="CLU_005210_0_3_1"/>
<dbReference type="InParanoid" id="Q3MHW0"/>
<dbReference type="OMA" id="WRWGCSG"/>
<dbReference type="OrthoDB" id="10256179at2759"/>
<dbReference type="TreeFam" id="TF330842"/>
<dbReference type="Proteomes" id="UP000009136">
    <property type="component" value="Chromosome 15"/>
</dbReference>
<dbReference type="Bgee" id="ENSBTAG00000005340">
    <property type="expression patterns" value="Expressed in isthmus of fallopian tube and 107 other cell types or tissues"/>
</dbReference>
<dbReference type="GO" id="GO:0005737">
    <property type="term" value="C:cytoplasm"/>
    <property type="evidence" value="ECO:0000318"/>
    <property type="project" value="GO_Central"/>
</dbReference>
<dbReference type="GO" id="GO:0005634">
    <property type="term" value="C:nucleus"/>
    <property type="evidence" value="ECO:0000318"/>
    <property type="project" value="GO_Central"/>
</dbReference>
<dbReference type="GO" id="GO:0005085">
    <property type="term" value="F:guanyl-nucleotide exchange factor activity"/>
    <property type="evidence" value="ECO:0007669"/>
    <property type="project" value="UniProtKB-KW"/>
</dbReference>
<dbReference type="GO" id="GO:0050709">
    <property type="term" value="P:negative regulation of protein secretion"/>
    <property type="evidence" value="ECO:0000318"/>
    <property type="project" value="GO_Central"/>
</dbReference>
<dbReference type="FunFam" id="2.130.10.30:FF:000029">
    <property type="entry name" value="Secretion-regulating guanine nucleotide exchange factor"/>
    <property type="match status" value="1"/>
</dbReference>
<dbReference type="Gene3D" id="2.130.10.30">
    <property type="entry name" value="Regulator of chromosome condensation 1/beta-lactamase-inhibitor protein II"/>
    <property type="match status" value="2"/>
</dbReference>
<dbReference type="InterPro" id="IPR009091">
    <property type="entry name" value="RCC1/BLIP-II"/>
</dbReference>
<dbReference type="InterPro" id="IPR000408">
    <property type="entry name" value="Reg_chr_condens"/>
</dbReference>
<dbReference type="InterPro" id="IPR051210">
    <property type="entry name" value="Ub_ligase/GEF_domain"/>
</dbReference>
<dbReference type="PANTHER" id="PTHR22870:SF466">
    <property type="entry name" value="ANKYRIN REPEAT-CONTAINING PROTEIN"/>
    <property type="match status" value="1"/>
</dbReference>
<dbReference type="PANTHER" id="PTHR22870">
    <property type="entry name" value="REGULATOR OF CHROMOSOME CONDENSATION"/>
    <property type="match status" value="1"/>
</dbReference>
<dbReference type="Pfam" id="PF25390">
    <property type="entry name" value="WD40_RLD"/>
    <property type="match status" value="1"/>
</dbReference>
<dbReference type="PRINTS" id="PR00633">
    <property type="entry name" value="RCCNDNSATION"/>
</dbReference>
<dbReference type="SUPFAM" id="SSF50985">
    <property type="entry name" value="RCC1/BLIP-II"/>
    <property type="match status" value="1"/>
</dbReference>
<dbReference type="PROSITE" id="PS00626">
    <property type="entry name" value="RCC1_2"/>
    <property type="match status" value="2"/>
</dbReference>
<dbReference type="PROSITE" id="PS50012">
    <property type="entry name" value="RCC1_3"/>
    <property type="match status" value="7"/>
</dbReference>
<protein>
    <recommendedName>
        <fullName>Secretion-regulating guanine nucleotide exchange factor</fullName>
    </recommendedName>
</protein>
<proteinExistence type="evidence at transcript level"/>
<name>SRGEF_BOVIN</name>
<comment type="function">
    <text evidence="1">Probable guanine nucleotide exchange factor (GEF), which may be involved in the secretion process.</text>
</comment>
<comment type="subunit">
    <text evidence="1">Interacts with SEC5. The interaction occurs only in the presence of magnesium or manganese and is stimulated by dCTP or GTP (By similarity).</text>
</comment>
<comment type="subcellular location">
    <subcellularLocation>
        <location evidence="1">Cytoplasm</location>
    </subcellularLocation>
    <subcellularLocation>
        <location evidence="1">Nucleus</location>
    </subcellularLocation>
</comment>